<evidence type="ECO:0000255" key="1"/>
<evidence type="ECO:0000255" key="2">
    <source>
        <dbReference type="PROSITE-ProRule" id="PRU00703"/>
    </source>
</evidence>
<evidence type="ECO:0000255" key="3">
    <source>
        <dbReference type="PROSITE-ProRule" id="PRU00797"/>
    </source>
</evidence>
<evidence type="ECO:0000305" key="4"/>
<sequence length="319" mass="35297">MINTNNYRIIAKRVISSATSALETLSNNIPSDFNRIIEFLLSFKGRIILTGIGKSGYIARKIAASFSSTGMPSFYLHPAEASHGDLGMITRNDLVMMLSNSGETKELFNIIEYCNNSSIKIAAMTMNKNSTLAKRSDFLLKIPECQEASLIGTPTISSLIMLSLGDAIMTVIHEERGFTRDDFKIYHPGGTIGANLTKIKNIMRSGDEIPLVYEDTSFTETIIIMNKKRLGCTLVTDKEQNLIGIITDGDLRRNIHDQIHLKTASSIMTKNPHYISSEIFAQEALNLMKAKNITNIPIVDDNIIIGIIHIHDLLSMGVS</sequence>
<dbReference type="EMBL" id="AJ235272">
    <property type="protein sequence ID" value="CAA14957.1"/>
    <property type="molecule type" value="Genomic_DNA"/>
</dbReference>
<dbReference type="PIR" id="C71654">
    <property type="entry name" value="C71654"/>
</dbReference>
<dbReference type="RefSeq" id="NP_220881.1">
    <property type="nucleotide sequence ID" value="NC_000963.1"/>
</dbReference>
<dbReference type="RefSeq" id="WP_004597752.1">
    <property type="nucleotide sequence ID" value="NC_000963.1"/>
</dbReference>
<dbReference type="SMR" id="Q9ZD42"/>
<dbReference type="STRING" id="272947.gene:17555585"/>
<dbReference type="EnsemblBacteria" id="CAA14957">
    <property type="protein sequence ID" value="CAA14957"/>
    <property type="gene ID" value="CAA14957"/>
</dbReference>
<dbReference type="KEGG" id="rpr:RP505"/>
<dbReference type="PATRIC" id="fig|272947.5.peg.514"/>
<dbReference type="eggNOG" id="COG0517">
    <property type="taxonomic scope" value="Bacteria"/>
</dbReference>
<dbReference type="eggNOG" id="COG0794">
    <property type="taxonomic scope" value="Bacteria"/>
</dbReference>
<dbReference type="HOGENOM" id="CLU_040681_13_1_5"/>
<dbReference type="OrthoDB" id="9762536at2"/>
<dbReference type="Proteomes" id="UP000002480">
    <property type="component" value="Chromosome"/>
</dbReference>
<dbReference type="GO" id="GO:0005524">
    <property type="term" value="F:ATP binding"/>
    <property type="evidence" value="ECO:0007669"/>
    <property type="project" value="UniProtKB-KW"/>
</dbReference>
<dbReference type="GO" id="GO:0016853">
    <property type="term" value="F:isomerase activity"/>
    <property type="evidence" value="ECO:0007669"/>
    <property type="project" value="InterPro"/>
</dbReference>
<dbReference type="GO" id="GO:1901135">
    <property type="term" value="P:carbohydrate derivative metabolic process"/>
    <property type="evidence" value="ECO:0007669"/>
    <property type="project" value="InterPro"/>
</dbReference>
<dbReference type="GO" id="GO:0005975">
    <property type="term" value="P:carbohydrate metabolic process"/>
    <property type="evidence" value="ECO:0007669"/>
    <property type="project" value="InterPro"/>
</dbReference>
<dbReference type="CDD" id="cd04604">
    <property type="entry name" value="CBS_pair_SIS_assoc"/>
    <property type="match status" value="1"/>
</dbReference>
<dbReference type="CDD" id="cd05014">
    <property type="entry name" value="SIS_Kpsf"/>
    <property type="match status" value="1"/>
</dbReference>
<dbReference type="FunFam" id="3.40.50.10490:FF:000011">
    <property type="entry name" value="Arabinose 5-phosphate isomerase"/>
    <property type="match status" value="1"/>
</dbReference>
<dbReference type="Gene3D" id="3.10.580.10">
    <property type="entry name" value="CBS-domain"/>
    <property type="match status" value="1"/>
</dbReference>
<dbReference type="Gene3D" id="3.40.50.10490">
    <property type="entry name" value="Glucose-6-phosphate isomerase like protein, domain 1"/>
    <property type="match status" value="1"/>
</dbReference>
<dbReference type="InterPro" id="IPR000644">
    <property type="entry name" value="CBS_dom"/>
</dbReference>
<dbReference type="InterPro" id="IPR046342">
    <property type="entry name" value="CBS_dom_sf"/>
</dbReference>
<dbReference type="InterPro" id="IPR050986">
    <property type="entry name" value="GutQ/KpsF_isomerases"/>
</dbReference>
<dbReference type="InterPro" id="IPR004800">
    <property type="entry name" value="KdsD/KpsF-type"/>
</dbReference>
<dbReference type="InterPro" id="IPR001347">
    <property type="entry name" value="SIS_dom"/>
</dbReference>
<dbReference type="InterPro" id="IPR046348">
    <property type="entry name" value="SIS_dom_sf"/>
</dbReference>
<dbReference type="InterPro" id="IPR035474">
    <property type="entry name" value="SIS_Kpsf"/>
</dbReference>
<dbReference type="NCBIfam" id="TIGR00393">
    <property type="entry name" value="kpsF"/>
    <property type="match status" value="1"/>
</dbReference>
<dbReference type="PANTHER" id="PTHR42745">
    <property type="match status" value="1"/>
</dbReference>
<dbReference type="PANTHER" id="PTHR42745:SF1">
    <property type="entry name" value="ARABINOSE 5-PHOSPHATE ISOMERASE KDSD"/>
    <property type="match status" value="1"/>
</dbReference>
<dbReference type="Pfam" id="PF00571">
    <property type="entry name" value="CBS"/>
    <property type="match status" value="2"/>
</dbReference>
<dbReference type="Pfam" id="PF01380">
    <property type="entry name" value="SIS"/>
    <property type="match status" value="1"/>
</dbReference>
<dbReference type="PIRSF" id="PIRSF004692">
    <property type="entry name" value="KdsD_KpsF"/>
    <property type="match status" value="1"/>
</dbReference>
<dbReference type="SMART" id="SM00116">
    <property type="entry name" value="CBS"/>
    <property type="match status" value="2"/>
</dbReference>
<dbReference type="SUPFAM" id="SSF53697">
    <property type="entry name" value="SIS domain"/>
    <property type="match status" value="1"/>
</dbReference>
<dbReference type="PROSITE" id="PS51371">
    <property type="entry name" value="CBS"/>
    <property type="match status" value="2"/>
</dbReference>
<dbReference type="PROSITE" id="PS51464">
    <property type="entry name" value="SIS"/>
    <property type="match status" value="1"/>
</dbReference>
<organism>
    <name type="scientific">Rickettsia prowazekii (strain Madrid E)</name>
    <dbReference type="NCBI Taxonomy" id="272947"/>
    <lineage>
        <taxon>Bacteria</taxon>
        <taxon>Pseudomonadati</taxon>
        <taxon>Pseudomonadota</taxon>
        <taxon>Alphaproteobacteria</taxon>
        <taxon>Rickettsiales</taxon>
        <taxon>Rickettsiaceae</taxon>
        <taxon>Rickettsieae</taxon>
        <taxon>Rickettsia</taxon>
        <taxon>typhus group</taxon>
    </lineage>
</organism>
<comment type="similarity">
    <text evidence="4">Belongs to the SIS family. GutQ/KpsF subfamily.</text>
</comment>
<gene>
    <name type="ordered locus">RP505</name>
</gene>
<accession>Q9ZD42</accession>
<proteinExistence type="inferred from homology"/>
<protein>
    <recommendedName>
        <fullName>Uncharacterized protein RP505</fullName>
    </recommendedName>
</protein>
<feature type="chain" id="PRO_0000136589" description="Uncharacterized protein RP505">
    <location>
        <begin position="1"/>
        <end position="319"/>
    </location>
</feature>
<feature type="domain" description="SIS" evidence="3">
    <location>
        <begin position="36"/>
        <end position="178"/>
    </location>
</feature>
<feature type="domain" description="CBS 1" evidence="2">
    <location>
        <begin position="203"/>
        <end position="263"/>
    </location>
</feature>
<feature type="domain" description="CBS 2" evidence="2">
    <location>
        <begin position="268"/>
        <end position="319"/>
    </location>
</feature>
<feature type="binding site" evidence="1">
    <location>
        <begin position="51"/>
        <end position="56"/>
    </location>
    <ligand>
        <name>ATP</name>
        <dbReference type="ChEBI" id="CHEBI:30616"/>
    </ligand>
</feature>
<reference key="1">
    <citation type="journal article" date="1998" name="Nature">
        <title>The genome sequence of Rickettsia prowazekii and the origin of mitochondria.</title>
        <authorList>
            <person name="Andersson S.G.E."/>
            <person name="Zomorodipour A."/>
            <person name="Andersson J.O."/>
            <person name="Sicheritz-Ponten T."/>
            <person name="Alsmark U.C.M."/>
            <person name="Podowski R.M."/>
            <person name="Naeslund A.K."/>
            <person name="Eriksson A.-S."/>
            <person name="Winkler H.H."/>
            <person name="Kurland C.G."/>
        </authorList>
    </citation>
    <scope>NUCLEOTIDE SEQUENCE [LARGE SCALE GENOMIC DNA]</scope>
    <source>
        <strain>Madrid E</strain>
    </source>
</reference>
<keyword id="KW-0067">ATP-binding</keyword>
<keyword id="KW-0129">CBS domain</keyword>
<keyword id="KW-0547">Nucleotide-binding</keyword>
<keyword id="KW-1185">Reference proteome</keyword>
<keyword id="KW-0677">Repeat</keyword>
<name>Y505_RICPR</name>